<protein>
    <recommendedName>
        <fullName>Gene 1.2 protein</fullName>
    </recommendedName>
</protein>
<name>V12_BPT3</name>
<comment type="function">
    <text>This is an inhibitor of the host (E.coli) dGTP triphosphohydrolase (dGTPase). It is implicated in DNA replication.</text>
</comment>
<sequence length="92" mass="10607">MMMGRIYSGNLNDYKDAVARLQEDHDVTVKMESFSYENPAKMCRSCGEVLSVFTRSGHLVASRTFEHSDSDVQINAQTAWLRKVHSELKHWK</sequence>
<keyword id="KW-0235">DNA replication</keyword>
<keyword id="KW-0244">Early protein</keyword>
<organismHost>
    <name type="scientific">Escherichia coli</name>
    <dbReference type="NCBI Taxonomy" id="562"/>
</organismHost>
<dbReference type="EMBL" id="X17255">
    <property type="protein sequence ID" value="CAA35124.1"/>
    <property type="molecule type" value="Genomic_DNA"/>
</dbReference>
<dbReference type="EMBL" id="X05031">
    <property type="protein sequence ID" value="CAA28699.1"/>
    <property type="molecule type" value="Genomic_DNA"/>
</dbReference>
<dbReference type="PIR" id="S09538">
    <property type="entry name" value="S09538"/>
</dbReference>
<dbReference type="RefSeq" id="NP_523304.1">
    <property type="nucleotide sequence ID" value="NC_003298.1"/>
</dbReference>
<dbReference type="SMR" id="P07716"/>
<dbReference type="KEGG" id="vg:927440"/>
<dbReference type="OrthoDB" id="17661at10239"/>
<dbReference type="GO" id="GO:0006260">
    <property type="term" value="P:DNA replication"/>
    <property type="evidence" value="ECO:0007669"/>
    <property type="project" value="UniProtKB-KW"/>
</dbReference>
<dbReference type="InterPro" id="IPR020147">
    <property type="entry name" value="Phage_T7-like_1.2"/>
</dbReference>
<dbReference type="Pfam" id="PF10922">
    <property type="entry name" value="T7-like_gp12"/>
    <property type="match status" value="1"/>
</dbReference>
<proteinExistence type="predicted"/>
<reference key="1">
    <citation type="journal article" date="1987" name="J. Mol. Biol.">
        <title>Sequence of a conditionally essential region of bacteriophage T3, including the primary origin of DNA replication.</title>
        <authorList>
            <person name="Schmitt M.P."/>
            <person name="Beck P.J."/>
            <person name="Kearney C.A."/>
            <person name="Spence J.L."/>
            <person name="Digiovanni D."/>
            <person name="Condreay J.P."/>
            <person name="Molineux I.J."/>
        </authorList>
    </citation>
    <scope>NUCLEOTIDE SEQUENCE [GENOMIC DNA]</scope>
    <source>
        <strain>Luria</strain>
    </source>
</reference>
<accession>P07716</accession>
<gene>
    <name type="primary">1.2</name>
</gene>
<organism>
    <name type="scientific">Enterobacteria phage T3</name>
    <name type="common">Bacteriophage T3</name>
    <dbReference type="NCBI Taxonomy" id="10759"/>
    <lineage>
        <taxon>Viruses</taxon>
        <taxon>Duplodnaviria</taxon>
        <taxon>Heunggongvirae</taxon>
        <taxon>Uroviricota</taxon>
        <taxon>Caudoviricetes</taxon>
        <taxon>Autographiviridae</taxon>
        <taxon>Studiervirinae</taxon>
        <taxon>Teetrevirus</taxon>
        <taxon>Teetrevirus T3</taxon>
    </lineage>
</organism>
<feature type="chain" id="PRO_0000106469" description="Gene 1.2 protein">
    <location>
        <begin position="1"/>
        <end position="92"/>
    </location>
</feature>